<organism>
    <name type="scientific">Pseudarthrobacter chlorophenolicus (strain ATCC 700700 / DSM 12829 / CIP 107037 / JCM 12360 / KCTC 9906 / NCIMB 13794 / A6)</name>
    <name type="common">Arthrobacter chlorophenolicus</name>
    <dbReference type="NCBI Taxonomy" id="452863"/>
    <lineage>
        <taxon>Bacteria</taxon>
        <taxon>Bacillati</taxon>
        <taxon>Actinomycetota</taxon>
        <taxon>Actinomycetes</taxon>
        <taxon>Micrococcales</taxon>
        <taxon>Micrococcaceae</taxon>
        <taxon>Pseudarthrobacter</taxon>
    </lineage>
</organism>
<reference key="1">
    <citation type="submission" date="2009-01" db="EMBL/GenBank/DDBJ databases">
        <title>Complete sequence of chromosome of Arthrobacter chlorophenolicus A6.</title>
        <authorList>
            <consortium name="US DOE Joint Genome Institute"/>
            <person name="Lucas S."/>
            <person name="Copeland A."/>
            <person name="Lapidus A."/>
            <person name="Glavina del Rio T."/>
            <person name="Tice H."/>
            <person name="Bruce D."/>
            <person name="Goodwin L."/>
            <person name="Pitluck S."/>
            <person name="Goltsman E."/>
            <person name="Clum A."/>
            <person name="Larimer F."/>
            <person name="Land M."/>
            <person name="Hauser L."/>
            <person name="Kyrpides N."/>
            <person name="Mikhailova N."/>
            <person name="Jansson J."/>
            <person name="Richardson P."/>
        </authorList>
    </citation>
    <scope>NUCLEOTIDE SEQUENCE [LARGE SCALE GENOMIC DNA]</scope>
    <source>
        <strain>ATCC 700700 / DSM 12829 / CIP 107037 / JCM 12360 / KCTC 9906 / NCIMB 13794 / A6</strain>
    </source>
</reference>
<name>LEUC_PSECP</name>
<evidence type="ECO:0000255" key="1">
    <source>
        <dbReference type="HAMAP-Rule" id="MF_01026"/>
    </source>
</evidence>
<evidence type="ECO:0000256" key="2">
    <source>
        <dbReference type="SAM" id="MobiDB-lite"/>
    </source>
</evidence>
<protein>
    <recommendedName>
        <fullName evidence="1">3-isopropylmalate dehydratase large subunit</fullName>
        <ecNumber evidence="1">4.2.1.33</ecNumber>
    </recommendedName>
    <alternativeName>
        <fullName evidence="1">Alpha-IPM isomerase</fullName>
        <shortName evidence="1">IPMI</shortName>
    </alternativeName>
    <alternativeName>
        <fullName evidence="1">Isopropylmalate isomerase</fullName>
    </alternativeName>
</protein>
<keyword id="KW-0004">4Fe-4S</keyword>
<keyword id="KW-0028">Amino-acid biosynthesis</keyword>
<keyword id="KW-0100">Branched-chain amino acid biosynthesis</keyword>
<keyword id="KW-0408">Iron</keyword>
<keyword id="KW-0411">Iron-sulfur</keyword>
<keyword id="KW-0432">Leucine biosynthesis</keyword>
<keyword id="KW-0456">Lyase</keyword>
<keyword id="KW-0479">Metal-binding</keyword>
<dbReference type="EC" id="4.2.1.33" evidence="1"/>
<dbReference type="EMBL" id="CP001341">
    <property type="protein sequence ID" value="ACL40221.1"/>
    <property type="molecule type" value="Genomic_DNA"/>
</dbReference>
<dbReference type="RefSeq" id="WP_015937436.1">
    <property type="nucleotide sequence ID" value="NC_011886.1"/>
</dbReference>
<dbReference type="SMR" id="B8HAC9"/>
<dbReference type="STRING" id="452863.Achl_2256"/>
<dbReference type="KEGG" id="ach:Achl_2256"/>
<dbReference type="eggNOG" id="COG0065">
    <property type="taxonomic scope" value="Bacteria"/>
</dbReference>
<dbReference type="HOGENOM" id="CLU_006714_3_4_11"/>
<dbReference type="OrthoDB" id="9802769at2"/>
<dbReference type="UniPathway" id="UPA00048">
    <property type="reaction ID" value="UER00071"/>
</dbReference>
<dbReference type="Proteomes" id="UP000002505">
    <property type="component" value="Chromosome"/>
</dbReference>
<dbReference type="GO" id="GO:0003861">
    <property type="term" value="F:3-isopropylmalate dehydratase activity"/>
    <property type="evidence" value="ECO:0007669"/>
    <property type="project" value="UniProtKB-UniRule"/>
</dbReference>
<dbReference type="GO" id="GO:0051539">
    <property type="term" value="F:4 iron, 4 sulfur cluster binding"/>
    <property type="evidence" value="ECO:0007669"/>
    <property type="project" value="UniProtKB-KW"/>
</dbReference>
<dbReference type="GO" id="GO:0046872">
    <property type="term" value="F:metal ion binding"/>
    <property type="evidence" value="ECO:0007669"/>
    <property type="project" value="UniProtKB-KW"/>
</dbReference>
<dbReference type="GO" id="GO:0009098">
    <property type="term" value="P:L-leucine biosynthetic process"/>
    <property type="evidence" value="ECO:0007669"/>
    <property type="project" value="UniProtKB-UniRule"/>
</dbReference>
<dbReference type="CDD" id="cd01583">
    <property type="entry name" value="IPMI"/>
    <property type="match status" value="1"/>
</dbReference>
<dbReference type="FunFam" id="3.30.499.10:FF:000007">
    <property type="entry name" value="3-isopropylmalate dehydratase large subunit"/>
    <property type="match status" value="1"/>
</dbReference>
<dbReference type="Gene3D" id="3.30.499.10">
    <property type="entry name" value="Aconitase, domain 3"/>
    <property type="match status" value="2"/>
</dbReference>
<dbReference type="HAMAP" id="MF_01026">
    <property type="entry name" value="LeuC_type1"/>
    <property type="match status" value="1"/>
</dbReference>
<dbReference type="InterPro" id="IPR004430">
    <property type="entry name" value="3-IsopropMal_deHydase_lsu"/>
</dbReference>
<dbReference type="InterPro" id="IPR015931">
    <property type="entry name" value="Acnase/IPM_dHydase_lsu_aba_1/3"/>
</dbReference>
<dbReference type="InterPro" id="IPR001030">
    <property type="entry name" value="Acoase/IPM_deHydtase_lsu_aba"/>
</dbReference>
<dbReference type="InterPro" id="IPR018136">
    <property type="entry name" value="Aconitase_4Fe-4S_BS"/>
</dbReference>
<dbReference type="InterPro" id="IPR036008">
    <property type="entry name" value="Aconitase_4Fe-4S_dom"/>
</dbReference>
<dbReference type="InterPro" id="IPR050067">
    <property type="entry name" value="IPM_dehydratase_rel_enz"/>
</dbReference>
<dbReference type="InterPro" id="IPR033941">
    <property type="entry name" value="IPMI_cat"/>
</dbReference>
<dbReference type="NCBIfam" id="TIGR00170">
    <property type="entry name" value="leuC"/>
    <property type="match status" value="1"/>
</dbReference>
<dbReference type="NCBIfam" id="NF004016">
    <property type="entry name" value="PRK05478.1"/>
    <property type="match status" value="1"/>
</dbReference>
<dbReference type="NCBIfam" id="NF009116">
    <property type="entry name" value="PRK12466.1"/>
    <property type="match status" value="1"/>
</dbReference>
<dbReference type="PANTHER" id="PTHR43822:SF9">
    <property type="entry name" value="3-ISOPROPYLMALATE DEHYDRATASE"/>
    <property type="match status" value="1"/>
</dbReference>
<dbReference type="PANTHER" id="PTHR43822">
    <property type="entry name" value="HOMOACONITASE, MITOCHONDRIAL-RELATED"/>
    <property type="match status" value="1"/>
</dbReference>
<dbReference type="Pfam" id="PF00330">
    <property type="entry name" value="Aconitase"/>
    <property type="match status" value="1"/>
</dbReference>
<dbReference type="PRINTS" id="PR00415">
    <property type="entry name" value="ACONITASE"/>
</dbReference>
<dbReference type="SUPFAM" id="SSF53732">
    <property type="entry name" value="Aconitase iron-sulfur domain"/>
    <property type="match status" value="1"/>
</dbReference>
<dbReference type="PROSITE" id="PS00450">
    <property type="entry name" value="ACONITASE_1"/>
    <property type="match status" value="1"/>
</dbReference>
<dbReference type="PROSITE" id="PS01244">
    <property type="entry name" value="ACONITASE_2"/>
    <property type="match status" value="1"/>
</dbReference>
<sequence>MAKTLAEKVWDAHVVRKGDGAGANAQPDLLFIDLHLVHEVTSPQAFEGLRLAGRPLRRPDLTIATEDHNTPTLDIDKPIADLTSRTQIQTLRNNCAEFGVRLHSLGDAEQGIVHVVGPQLGLTQPGMTVVCGDSHTSTHGAFGALAMGIGTSEVEHVMATQTLSLKPFKTMAINVEGTLRPGVTAKDIILAVIAKIGTGGGQGYVLEYRGSAIRALSMDARMTICNMSIEAGARAGMVAPDETTYAYMQGRPHAPEGADWDAAVEYWNTLKTDDDATFDVEVDLDADTLEPFVTWGTNPGQGVSLSQAVPSPEDFGDENAKAAAERALQYMGLEAGTPMKDIRVDTVFLGSCTNSRIEDLRAAADIIRGREKDPKVRMLVVPGSARVRLEAEAEGLDRVFKDFGAEWRFAGCSMCLGMNPDQLEPGERCASTSNRNFEGRQGKGGRTHLVSPVVAAATAVRGTLSSPSDLDPAPASAAIRTDAA</sequence>
<accession>B8HAC9</accession>
<proteinExistence type="inferred from homology"/>
<feature type="chain" id="PRO_1000149349" description="3-isopropylmalate dehydratase large subunit">
    <location>
        <begin position="1"/>
        <end position="484"/>
    </location>
</feature>
<feature type="region of interest" description="Disordered" evidence="2">
    <location>
        <begin position="463"/>
        <end position="484"/>
    </location>
</feature>
<feature type="compositionally biased region" description="Low complexity" evidence="2">
    <location>
        <begin position="464"/>
        <end position="478"/>
    </location>
</feature>
<feature type="binding site" evidence="1">
    <location>
        <position position="352"/>
    </location>
    <ligand>
        <name>[4Fe-4S] cluster</name>
        <dbReference type="ChEBI" id="CHEBI:49883"/>
    </ligand>
</feature>
<feature type="binding site" evidence="1">
    <location>
        <position position="412"/>
    </location>
    <ligand>
        <name>[4Fe-4S] cluster</name>
        <dbReference type="ChEBI" id="CHEBI:49883"/>
    </ligand>
</feature>
<feature type="binding site" evidence="1">
    <location>
        <position position="415"/>
    </location>
    <ligand>
        <name>[4Fe-4S] cluster</name>
        <dbReference type="ChEBI" id="CHEBI:49883"/>
    </ligand>
</feature>
<gene>
    <name evidence="1" type="primary">leuC</name>
    <name type="ordered locus">Achl_2256</name>
</gene>
<comment type="function">
    <text evidence="1">Catalyzes the isomerization between 2-isopropylmalate and 3-isopropylmalate, via the formation of 2-isopropylmaleate.</text>
</comment>
<comment type="catalytic activity">
    <reaction evidence="1">
        <text>(2R,3S)-3-isopropylmalate = (2S)-2-isopropylmalate</text>
        <dbReference type="Rhea" id="RHEA:32287"/>
        <dbReference type="ChEBI" id="CHEBI:1178"/>
        <dbReference type="ChEBI" id="CHEBI:35121"/>
        <dbReference type="EC" id="4.2.1.33"/>
    </reaction>
</comment>
<comment type="cofactor">
    <cofactor evidence="1">
        <name>[4Fe-4S] cluster</name>
        <dbReference type="ChEBI" id="CHEBI:49883"/>
    </cofactor>
    <text evidence="1">Binds 1 [4Fe-4S] cluster per subunit.</text>
</comment>
<comment type="pathway">
    <text evidence="1">Amino-acid biosynthesis; L-leucine biosynthesis; L-leucine from 3-methyl-2-oxobutanoate: step 2/4.</text>
</comment>
<comment type="subunit">
    <text evidence="1">Heterodimer of LeuC and LeuD.</text>
</comment>
<comment type="similarity">
    <text evidence="1">Belongs to the aconitase/IPM isomerase family. LeuC type 1 subfamily.</text>
</comment>